<accession>Q98KB0</accession>
<reference key="1">
    <citation type="journal article" date="2000" name="DNA Res.">
        <title>Complete genome structure of the nitrogen-fixing symbiotic bacterium Mesorhizobium loti.</title>
        <authorList>
            <person name="Kaneko T."/>
            <person name="Nakamura Y."/>
            <person name="Sato S."/>
            <person name="Asamizu E."/>
            <person name="Kato T."/>
            <person name="Sasamoto S."/>
            <person name="Watanabe A."/>
            <person name="Idesawa K."/>
            <person name="Ishikawa A."/>
            <person name="Kawashima K."/>
            <person name="Kimura T."/>
            <person name="Kishida Y."/>
            <person name="Kiyokawa C."/>
            <person name="Kohara M."/>
            <person name="Matsumoto M."/>
            <person name="Matsuno A."/>
            <person name="Mochizuki Y."/>
            <person name="Nakayama S."/>
            <person name="Nakazaki N."/>
            <person name="Shimpo S."/>
            <person name="Sugimoto M."/>
            <person name="Takeuchi C."/>
            <person name="Yamada M."/>
            <person name="Tabata S."/>
        </authorList>
    </citation>
    <scope>NUCLEOTIDE SEQUENCE [LARGE SCALE GENOMIC DNA]</scope>
    <source>
        <strain>LMG 29417 / CECT 9101 / MAFF 303099</strain>
    </source>
</reference>
<gene>
    <name evidence="1" type="primary">mraY</name>
    <name type="ordered locus">mll1558</name>
</gene>
<feature type="chain" id="PRO_0000108875" description="Phospho-N-acetylmuramoyl-pentapeptide-transferase">
    <location>
        <begin position="1"/>
        <end position="360"/>
    </location>
</feature>
<feature type="transmembrane region" description="Helical" evidence="1">
    <location>
        <begin position="27"/>
        <end position="47"/>
    </location>
</feature>
<feature type="transmembrane region" description="Helical" evidence="1">
    <location>
        <begin position="71"/>
        <end position="91"/>
    </location>
</feature>
<feature type="transmembrane region" description="Helical" evidence="1">
    <location>
        <begin position="93"/>
        <end position="113"/>
    </location>
</feature>
<feature type="transmembrane region" description="Helical" evidence="1">
    <location>
        <begin position="134"/>
        <end position="154"/>
    </location>
</feature>
<feature type="transmembrane region" description="Helical" evidence="1">
    <location>
        <begin position="168"/>
        <end position="188"/>
    </location>
</feature>
<feature type="transmembrane region" description="Helical" evidence="1">
    <location>
        <begin position="199"/>
        <end position="219"/>
    </location>
</feature>
<feature type="transmembrane region" description="Helical" evidence="1">
    <location>
        <begin position="239"/>
        <end position="259"/>
    </location>
</feature>
<feature type="transmembrane region" description="Helical" evidence="1">
    <location>
        <begin position="262"/>
        <end position="282"/>
    </location>
</feature>
<feature type="transmembrane region" description="Helical" evidence="1">
    <location>
        <begin position="288"/>
        <end position="308"/>
    </location>
</feature>
<feature type="transmembrane region" description="Helical" evidence="1">
    <location>
        <begin position="337"/>
        <end position="357"/>
    </location>
</feature>
<evidence type="ECO:0000255" key="1">
    <source>
        <dbReference type="HAMAP-Rule" id="MF_00038"/>
    </source>
</evidence>
<name>MRAY_RHILO</name>
<protein>
    <recommendedName>
        <fullName evidence="1">Phospho-N-acetylmuramoyl-pentapeptide-transferase</fullName>
        <ecNumber evidence="1">2.7.8.13</ecNumber>
    </recommendedName>
    <alternativeName>
        <fullName evidence="1">UDP-MurNAc-pentapeptide phosphotransferase</fullName>
    </alternativeName>
</protein>
<sequence>MFTLLVDFADKISVFNVFRYITFRTGGALITSALIVFIFGPTIINSLRLRQGKGQPIRADGPQTHFKKAGTPTMGGLMILSGIIGSSLLWANLSSIYVWVVLLVTLGFGSIGFYDDYLKVTKQSHLGFSGKARLGLEFIIAGIAAWVIMHNGQAPFSSSLTFPFAKEFIINLGWFFIPFSCFVIVGAGNAVNLTDGLDGLAIVPIMIAAASFGVIAYLSGNAVFAEYLQIHFVPGTGELAVVLGAVIGAGLGFLWFNAPPAAIFMGDTGSLAMGGLIGTVAVATKHEIVLVIVGGLFVVEILSVIIQVGYFKMTGKRVFLMAPIHHHFEKLGWTESQVVIRFWIIAVILALVGLSTLKLR</sequence>
<comment type="function">
    <text evidence="1">Catalyzes the initial step of the lipid cycle reactions in the biosynthesis of the cell wall peptidoglycan: transfers peptidoglycan precursor phospho-MurNAc-pentapeptide from UDP-MurNAc-pentapeptide onto the lipid carrier undecaprenyl phosphate, yielding undecaprenyl-pyrophosphoryl-MurNAc-pentapeptide, known as lipid I.</text>
</comment>
<comment type="catalytic activity">
    <reaction evidence="1">
        <text>UDP-N-acetyl-alpha-D-muramoyl-L-alanyl-gamma-D-glutamyl-meso-2,6-diaminopimeloyl-D-alanyl-D-alanine + di-trans,octa-cis-undecaprenyl phosphate = di-trans,octa-cis-undecaprenyl diphospho-N-acetyl-alpha-D-muramoyl-L-alanyl-D-glutamyl-meso-2,6-diaminopimeloyl-D-alanyl-D-alanine + UMP</text>
        <dbReference type="Rhea" id="RHEA:28386"/>
        <dbReference type="ChEBI" id="CHEBI:57865"/>
        <dbReference type="ChEBI" id="CHEBI:60392"/>
        <dbReference type="ChEBI" id="CHEBI:61386"/>
        <dbReference type="ChEBI" id="CHEBI:61387"/>
        <dbReference type="EC" id="2.7.8.13"/>
    </reaction>
</comment>
<comment type="cofactor">
    <cofactor evidence="1">
        <name>Mg(2+)</name>
        <dbReference type="ChEBI" id="CHEBI:18420"/>
    </cofactor>
</comment>
<comment type="pathway">
    <text evidence="1">Cell wall biogenesis; peptidoglycan biosynthesis.</text>
</comment>
<comment type="subcellular location">
    <subcellularLocation>
        <location evidence="1">Cell inner membrane</location>
        <topology evidence="1">Multi-pass membrane protein</topology>
    </subcellularLocation>
</comment>
<comment type="similarity">
    <text evidence="1">Belongs to the glycosyltransferase 4 family. MraY subfamily.</text>
</comment>
<dbReference type="EC" id="2.7.8.13" evidence="1"/>
<dbReference type="EMBL" id="BA000012">
    <property type="protein sequence ID" value="BAB48904.1"/>
    <property type="molecule type" value="Genomic_DNA"/>
</dbReference>
<dbReference type="RefSeq" id="WP_010910257.1">
    <property type="nucleotide sequence ID" value="NC_002678.2"/>
</dbReference>
<dbReference type="SMR" id="Q98KB0"/>
<dbReference type="GeneID" id="66683336"/>
<dbReference type="KEGG" id="mlo:mll1558"/>
<dbReference type="eggNOG" id="COG0472">
    <property type="taxonomic scope" value="Bacteria"/>
</dbReference>
<dbReference type="HOGENOM" id="CLU_023982_0_0_5"/>
<dbReference type="UniPathway" id="UPA00219"/>
<dbReference type="Proteomes" id="UP000000552">
    <property type="component" value="Chromosome"/>
</dbReference>
<dbReference type="GO" id="GO:0005886">
    <property type="term" value="C:plasma membrane"/>
    <property type="evidence" value="ECO:0007669"/>
    <property type="project" value="UniProtKB-SubCell"/>
</dbReference>
<dbReference type="GO" id="GO:0046872">
    <property type="term" value="F:metal ion binding"/>
    <property type="evidence" value="ECO:0007669"/>
    <property type="project" value="UniProtKB-KW"/>
</dbReference>
<dbReference type="GO" id="GO:0008963">
    <property type="term" value="F:phospho-N-acetylmuramoyl-pentapeptide-transferase activity"/>
    <property type="evidence" value="ECO:0007669"/>
    <property type="project" value="UniProtKB-UniRule"/>
</dbReference>
<dbReference type="GO" id="GO:0051992">
    <property type="term" value="F:UDP-N-acetylmuramoyl-L-alanyl-D-glutamyl-meso-2,6-diaminopimelyl-D-alanyl-D-alanine:undecaprenyl-phosphate transferase activity"/>
    <property type="evidence" value="ECO:0007669"/>
    <property type="project" value="RHEA"/>
</dbReference>
<dbReference type="GO" id="GO:0051301">
    <property type="term" value="P:cell division"/>
    <property type="evidence" value="ECO:0007669"/>
    <property type="project" value="UniProtKB-KW"/>
</dbReference>
<dbReference type="GO" id="GO:0071555">
    <property type="term" value="P:cell wall organization"/>
    <property type="evidence" value="ECO:0007669"/>
    <property type="project" value="UniProtKB-KW"/>
</dbReference>
<dbReference type="GO" id="GO:0009252">
    <property type="term" value="P:peptidoglycan biosynthetic process"/>
    <property type="evidence" value="ECO:0007669"/>
    <property type="project" value="UniProtKB-UniRule"/>
</dbReference>
<dbReference type="GO" id="GO:0008360">
    <property type="term" value="P:regulation of cell shape"/>
    <property type="evidence" value="ECO:0007669"/>
    <property type="project" value="UniProtKB-KW"/>
</dbReference>
<dbReference type="CDD" id="cd06852">
    <property type="entry name" value="GT_MraY"/>
    <property type="match status" value="1"/>
</dbReference>
<dbReference type="HAMAP" id="MF_00038">
    <property type="entry name" value="MraY"/>
    <property type="match status" value="1"/>
</dbReference>
<dbReference type="InterPro" id="IPR000715">
    <property type="entry name" value="Glycosyl_transferase_4"/>
</dbReference>
<dbReference type="InterPro" id="IPR003524">
    <property type="entry name" value="PNAcMuramoyl-5peptid_Trfase"/>
</dbReference>
<dbReference type="InterPro" id="IPR018480">
    <property type="entry name" value="PNAcMuramoyl-5peptid_Trfase_CS"/>
</dbReference>
<dbReference type="NCBIfam" id="TIGR00445">
    <property type="entry name" value="mraY"/>
    <property type="match status" value="1"/>
</dbReference>
<dbReference type="PANTHER" id="PTHR22926">
    <property type="entry name" value="PHOSPHO-N-ACETYLMURAMOYL-PENTAPEPTIDE-TRANSFERASE"/>
    <property type="match status" value="1"/>
</dbReference>
<dbReference type="PANTHER" id="PTHR22926:SF5">
    <property type="entry name" value="PHOSPHO-N-ACETYLMURAMOYL-PENTAPEPTIDE-TRANSFERASE HOMOLOG"/>
    <property type="match status" value="1"/>
</dbReference>
<dbReference type="Pfam" id="PF00953">
    <property type="entry name" value="Glycos_transf_4"/>
    <property type="match status" value="1"/>
</dbReference>
<dbReference type="Pfam" id="PF10555">
    <property type="entry name" value="MraY_sig1"/>
    <property type="match status" value="1"/>
</dbReference>
<dbReference type="PROSITE" id="PS01347">
    <property type="entry name" value="MRAY_1"/>
    <property type="match status" value="1"/>
</dbReference>
<dbReference type="PROSITE" id="PS01348">
    <property type="entry name" value="MRAY_2"/>
    <property type="match status" value="1"/>
</dbReference>
<organism>
    <name type="scientific">Mesorhizobium japonicum (strain LMG 29417 / CECT 9101 / MAFF 303099)</name>
    <name type="common">Mesorhizobium loti (strain MAFF 303099)</name>
    <dbReference type="NCBI Taxonomy" id="266835"/>
    <lineage>
        <taxon>Bacteria</taxon>
        <taxon>Pseudomonadati</taxon>
        <taxon>Pseudomonadota</taxon>
        <taxon>Alphaproteobacteria</taxon>
        <taxon>Hyphomicrobiales</taxon>
        <taxon>Phyllobacteriaceae</taxon>
        <taxon>Mesorhizobium</taxon>
    </lineage>
</organism>
<keyword id="KW-0131">Cell cycle</keyword>
<keyword id="KW-0132">Cell division</keyword>
<keyword id="KW-0997">Cell inner membrane</keyword>
<keyword id="KW-1003">Cell membrane</keyword>
<keyword id="KW-0133">Cell shape</keyword>
<keyword id="KW-0961">Cell wall biogenesis/degradation</keyword>
<keyword id="KW-0460">Magnesium</keyword>
<keyword id="KW-0472">Membrane</keyword>
<keyword id="KW-0479">Metal-binding</keyword>
<keyword id="KW-0573">Peptidoglycan synthesis</keyword>
<keyword id="KW-0808">Transferase</keyword>
<keyword id="KW-0812">Transmembrane</keyword>
<keyword id="KW-1133">Transmembrane helix</keyword>
<proteinExistence type="inferred from homology"/>